<feature type="chain" id="PRO_0000149189" description="DNA polymerase sliding clamp 1">
    <location>
        <begin position="1"/>
        <end position="247"/>
    </location>
</feature>
<feature type="strand" evidence="4">
    <location>
        <begin position="1"/>
        <end position="5"/>
    </location>
</feature>
<feature type="helix" evidence="4">
    <location>
        <begin position="6"/>
        <end position="17"/>
    </location>
</feature>
<feature type="strand" evidence="4">
    <location>
        <begin position="21"/>
        <end position="28"/>
    </location>
</feature>
<feature type="strand" evidence="4">
    <location>
        <begin position="31"/>
        <end position="37"/>
    </location>
</feature>
<feature type="strand" evidence="4">
    <location>
        <begin position="41"/>
        <end position="50"/>
    </location>
</feature>
<feature type="helix" evidence="4">
    <location>
        <begin position="51"/>
        <end position="53"/>
    </location>
</feature>
<feature type="strand" evidence="4">
    <location>
        <begin position="54"/>
        <end position="59"/>
    </location>
</feature>
<feature type="strand" evidence="4">
    <location>
        <begin position="64"/>
        <end position="71"/>
    </location>
</feature>
<feature type="helix" evidence="4">
    <location>
        <begin position="72"/>
        <end position="79"/>
    </location>
</feature>
<feature type="strand" evidence="4">
    <location>
        <begin position="87"/>
        <end position="92"/>
    </location>
</feature>
<feature type="strand" evidence="4">
    <location>
        <begin position="94"/>
        <end position="112"/>
    </location>
</feature>
<feature type="strand" evidence="4">
    <location>
        <begin position="129"/>
        <end position="135"/>
    </location>
</feature>
<feature type="helix" evidence="4">
    <location>
        <begin position="136"/>
        <end position="149"/>
    </location>
</feature>
<feature type="strand" evidence="4">
    <location>
        <begin position="151"/>
        <end position="158"/>
    </location>
</feature>
<feature type="strand" evidence="4">
    <location>
        <begin position="161"/>
        <end position="166"/>
    </location>
</feature>
<feature type="strand" evidence="4">
    <location>
        <begin position="175"/>
        <end position="179"/>
    </location>
</feature>
<feature type="strand" evidence="4">
    <location>
        <begin position="185"/>
        <end position="192"/>
    </location>
</feature>
<feature type="strand" evidence="4">
    <location>
        <begin position="194"/>
        <end position="199"/>
    </location>
</feature>
<feature type="helix" evidence="4">
    <location>
        <begin position="200"/>
        <end position="206"/>
    </location>
</feature>
<feature type="helix" evidence="4">
    <location>
        <begin position="207"/>
        <end position="212"/>
    </location>
</feature>
<feature type="strand" evidence="4">
    <location>
        <begin position="214"/>
        <end position="220"/>
    </location>
</feature>
<feature type="strand" evidence="4">
    <location>
        <begin position="226"/>
        <end position="231"/>
    </location>
</feature>
<feature type="strand" evidence="4">
    <location>
        <begin position="237"/>
        <end position="242"/>
    </location>
</feature>
<protein>
    <recommendedName>
        <fullName evidence="2">DNA polymerase sliding clamp 1</fullName>
    </recommendedName>
    <alternativeName>
        <fullName evidence="2">Proliferating cell nuclear antigen homolog 1</fullName>
        <shortName evidence="2">PCNA 1</shortName>
    </alternativeName>
</protein>
<sequence length="247" mass="27667">MFRYEAKVFKELVDSVSKILDEGLFIITGEGLRLRGMDPARVALVDIEIPSSSFFDFYMAGDVERVELGVNMETLKGVVARAKKGDQLEVRVREDKVLFIVESVVLRRYLLPNLEVIVDVPEDISLEFDATATVIADVVKKTLRDVELVGDIVEFDAGEDYLSIRSVGPERRRVETRLTRESPALIDLEVKEPATSRYDVGYLKRMLGVAKIAESIELSFSTDKPLKMVFKSPDGSRVTYLLAPSTG</sequence>
<proteinExistence type="evidence at protein level"/>
<evidence type="ECO:0000250" key="1"/>
<evidence type="ECO:0000255" key="2">
    <source>
        <dbReference type="HAMAP-Rule" id="MF_00317"/>
    </source>
</evidence>
<evidence type="ECO:0000305" key="3"/>
<evidence type="ECO:0007829" key="4">
    <source>
        <dbReference type="PDB" id="6AIG"/>
    </source>
</evidence>
<organism>
    <name type="scientific">Aeropyrum pernix (strain ATCC 700893 / DSM 11879 / JCM 9820 / NBRC 100138 / K1)</name>
    <dbReference type="NCBI Taxonomy" id="272557"/>
    <lineage>
        <taxon>Archaea</taxon>
        <taxon>Thermoproteota</taxon>
        <taxon>Thermoprotei</taxon>
        <taxon>Desulfurococcales</taxon>
        <taxon>Desulfurococcaceae</taxon>
        <taxon>Aeropyrum</taxon>
    </lineage>
</organism>
<keyword id="KW-0002">3D-structure</keyword>
<keyword id="KW-0235">DNA replication</keyword>
<keyword id="KW-0238">DNA-binding</keyword>
<keyword id="KW-1185">Reference proteome</keyword>
<accession>Q9YFT8</accession>
<reference key="1">
    <citation type="journal article" date="1999" name="DNA Res.">
        <title>Complete genome sequence of an aerobic hyper-thermophilic crenarchaeon, Aeropyrum pernix K1.</title>
        <authorList>
            <person name="Kawarabayasi Y."/>
            <person name="Hino Y."/>
            <person name="Horikawa H."/>
            <person name="Yamazaki S."/>
            <person name="Haikawa Y."/>
            <person name="Jin-no K."/>
            <person name="Takahashi M."/>
            <person name="Sekine M."/>
            <person name="Baba S."/>
            <person name="Ankai A."/>
            <person name="Kosugi H."/>
            <person name="Hosoyama A."/>
            <person name="Fukui S."/>
            <person name="Nagai Y."/>
            <person name="Nishijima K."/>
            <person name="Nakazawa H."/>
            <person name="Takamiya M."/>
            <person name="Masuda S."/>
            <person name="Funahashi T."/>
            <person name="Tanaka T."/>
            <person name="Kudoh Y."/>
            <person name="Yamazaki J."/>
            <person name="Kushida N."/>
            <person name="Oguchi A."/>
            <person name="Aoki K."/>
            <person name="Kubota K."/>
            <person name="Nakamura Y."/>
            <person name="Nomura N."/>
            <person name="Sako Y."/>
            <person name="Kikuchi H."/>
        </authorList>
    </citation>
    <scope>NUCLEOTIDE SEQUENCE [LARGE SCALE GENOMIC DNA]</scope>
    <source>
        <strain>ATCC 700893 / DSM 11879 / JCM 9820 / NBRC 100138 / K1</strain>
    </source>
</reference>
<comment type="function">
    <text evidence="2">Sliding clamp subunit that acts as a moving platform for DNA processing. Responsible for tethering the catalytic subunit of DNA polymerase and other proteins to DNA during high-speed replication.</text>
</comment>
<comment type="subunit">
    <text evidence="1">Heterotrimer. The subunits circularize to form a toroid; DNA passes through its center. Replication factor C (RFC) is required to load the toroid on the DNA (By similarity).</text>
</comment>
<comment type="similarity">
    <text evidence="2">Belongs to the PCNA family.</text>
</comment>
<comment type="sequence caution" evidence="3">
    <conflict type="erroneous initiation">
        <sequence resource="EMBL-CDS" id="BAA79073"/>
    </conflict>
    <text>Truncated N-terminus.</text>
</comment>
<gene>
    <name evidence="2" type="primary">pcn1</name>
    <name type="synonym">pcnA</name>
    <name type="ordered locus">APE_0162</name>
</gene>
<name>PCNA1_AERPE</name>
<dbReference type="EMBL" id="BA000002">
    <property type="protein sequence ID" value="BAA79073.1"/>
    <property type="status" value="ALT_INIT"/>
    <property type="molecule type" value="Genomic_DNA"/>
</dbReference>
<dbReference type="PIR" id="G72771">
    <property type="entry name" value="G72771"/>
</dbReference>
<dbReference type="PDB" id="6AIG">
    <property type="method" value="X-ray"/>
    <property type="resolution" value="2.00 A"/>
    <property type="chains" value="A=1-247"/>
</dbReference>
<dbReference type="PDBsum" id="6AIG"/>
<dbReference type="SMR" id="Q9YFT8"/>
<dbReference type="STRING" id="272557.APE_0162"/>
<dbReference type="EnsemblBacteria" id="BAA79073">
    <property type="protein sequence ID" value="BAA79073"/>
    <property type="gene ID" value="APE_0162"/>
</dbReference>
<dbReference type="KEGG" id="ape:APE_0162"/>
<dbReference type="eggNOG" id="arCOG00488">
    <property type="taxonomic scope" value="Archaea"/>
</dbReference>
<dbReference type="Proteomes" id="UP000002518">
    <property type="component" value="Chromosome"/>
</dbReference>
<dbReference type="GO" id="GO:0003677">
    <property type="term" value="F:DNA binding"/>
    <property type="evidence" value="ECO:0007669"/>
    <property type="project" value="UniProtKB-UniRule"/>
</dbReference>
<dbReference type="GO" id="GO:0030337">
    <property type="term" value="F:DNA polymerase processivity factor activity"/>
    <property type="evidence" value="ECO:0007669"/>
    <property type="project" value="UniProtKB-UniRule"/>
</dbReference>
<dbReference type="GO" id="GO:0006272">
    <property type="term" value="P:leading strand elongation"/>
    <property type="evidence" value="ECO:0007669"/>
    <property type="project" value="TreeGrafter"/>
</dbReference>
<dbReference type="GO" id="GO:0006275">
    <property type="term" value="P:regulation of DNA replication"/>
    <property type="evidence" value="ECO:0007669"/>
    <property type="project" value="UniProtKB-UniRule"/>
</dbReference>
<dbReference type="CDD" id="cd00577">
    <property type="entry name" value="PCNA"/>
    <property type="match status" value="1"/>
</dbReference>
<dbReference type="Gene3D" id="3.70.10.10">
    <property type="match status" value="1"/>
</dbReference>
<dbReference type="HAMAP" id="MF_00317">
    <property type="entry name" value="DNApol_clamp_arch"/>
    <property type="match status" value="1"/>
</dbReference>
<dbReference type="InterPro" id="IPR046938">
    <property type="entry name" value="DNA_clamp_sf"/>
</dbReference>
<dbReference type="InterPro" id="IPR000730">
    <property type="entry name" value="Pr_cel_nuc_antig"/>
</dbReference>
<dbReference type="InterPro" id="IPR022649">
    <property type="entry name" value="Pr_cel_nuc_antig_C"/>
</dbReference>
<dbReference type="InterPro" id="IPR022659">
    <property type="entry name" value="Pr_cel_nuc_antig_CS"/>
</dbReference>
<dbReference type="InterPro" id="IPR022648">
    <property type="entry name" value="Pr_cel_nuc_antig_N"/>
</dbReference>
<dbReference type="PANTHER" id="PTHR11352">
    <property type="entry name" value="PROLIFERATING CELL NUCLEAR ANTIGEN"/>
    <property type="match status" value="1"/>
</dbReference>
<dbReference type="PANTHER" id="PTHR11352:SF0">
    <property type="entry name" value="PROLIFERATING CELL NUCLEAR ANTIGEN"/>
    <property type="match status" value="1"/>
</dbReference>
<dbReference type="Pfam" id="PF02747">
    <property type="entry name" value="PCNA_C"/>
    <property type="match status" value="1"/>
</dbReference>
<dbReference type="Pfam" id="PF00705">
    <property type="entry name" value="PCNA_N"/>
    <property type="match status" value="1"/>
</dbReference>
<dbReference type="SUPFAM" id="SSF55979">
    <property type="entry name" value="DNA clamp"/>
    <property type="match status" value="2"/>
</dbReference>
<dbReference type="PROSITE" id="PS01251">
    <property type="entry name" value="PCNA_1"/>
    <property type="match status" value="1"/>
</dbReference>